<comment type="function">
    <text evidence="1">One of the primary rRNA binding proteins, this protein initially binds near the 5'-end of the 23S rRNA. It is important during the early stages of 50S assembly. It makes multiple contacts with different domains of the 23S rRNA in the assembled 50S subunit and ribosome.</text>
</comment>
<comment type="function">
    <text evidence="1">Forms part of the polypeptide exit tunnel.</text>
</comment>
<comment type="subunit">
    <text evidence="1">Part of the 50S ribosomal subunit.</text>
</comment>
<comment type="similarity">
    <text evidence="1">Belongs to the universal ribosomal protein uL4 family.</text>
</comment>
<name>RL4_ALTMD</name>
<gene>
    <name evidence="1" type="primary">rplD</name>
    <name type="ordered locus">MADE_1002265</name>
</gene>
<reference key="1">
    <citation type="journal article" date="2008" name="ISME J.">
        <title>Comparative genomics of two ecotypes of the marine planktonic copiotroph Alteromonas macleodii suggests alternative lifestyles associated with different kinds of particulate organic matter.</title>
        <authorList>
            <person name="Ivars-Martinez E."/>
            <person name="Martin-Cuadrado A.-B."/>
            <person name="D'Auria G."/>
            <person name="Mira A."/>
            <person name="Ferriera S."/>
            <person name="Johnson J."/>
            <person name="Friedman R."/>
            <person name="Rodriguez-Valera F."/>
        </authorList>
    </citation>
    <scope>NUCLEOTIDE SEQUENCE [LARGE SCALE GENOMIC DNA]</scope>
    <source>
        <strain>DSM 17117 / CIP 110805 / LMG 28347 / Deep ecotype</strain>
    </source>
</reference>
<accession>B4S092</accession>
<accession>F2G5N5</accession>
<keyword id="KW-0687">Ribonucleoprotein</keyword>
<keyword id="KW-0689">Ribosomal protein</keyword>
<keyword id="KW-0694">RNA-binding</keyword>
<keyword id="KW-0699">rRNA-binding</keyword>
<proteinExistence type="inferred from homology"/>
<organism>
    <name type="scientific">Alteromonas mediterranea (strain DSM 17117 / CIP 110805 / LMG 28347 / Deep ecotype)</name>
    <dbReference type="NCBI Taxonomy" id="1774373"/>
    <lineage>
        <taxon>Bacteria</taxon>
        <taxon>Pseudomonadati</taxon>
        <taxon>Pseudomonadota</taxon>
        <taxon>Gammaproteobacteria</taxon>
        <taxon>Alteromonadales</taxon>
        <taxon>Alteromonadaceae</taxon>
        <taxon>Alteromonas/Salinimonas group</taxon>
        <taxon>Alteromonas</taxon>
    </lineage>
</organism>
<protein>
    <recommendedName>
        <fullName evidence="1">Large ribosomal subunit protein uL4</fullName>
    </recommendedName>
    <alternativeName>
        <fullName evidence="3">50S ribosomal protein L4</fullName>
    </alternativeName>
</protein>
<feature type="chain" id="PRO_1000142071" description="Large ribosomal subunit protein uL4">
    <location>
        <begin position="1"/>
        <end position="201"/>
    </location>
</feature>
<feature type="region of interest" description="Disordered" evidence="2">
    <location>
        <begin position="44"/>
        <end position="66"/>
    </location>
</feature>
<feature type="compositionally biased region" description="Basic residues" evidence="2">
    <location>
        <begin position="55"/>
        <end position="66"/>
    </location>
</feature>
<evidence type="ECO:0000255" key="1">
    <source>
        <dbReference type="HAMAP-Rule" id="MF_01328"/>
    </source>
</evidence>
<evidence type="ECO:0000256" key="2">
    <source>
        <dbReference type="SAM" id="MobiDB-lite"/>
    </source>
</evidence>
<evidence type="ECO:0000305" key="3"/>
<sequence>MELTLKDAQSALEVSEATFGREFNEALVHQVVVAYGAGARQGTKAQKTRAEVRGGGKKPWRQKGTGRARAGTIRSPIWVGGGRAFAAKPRDFDQKVNKKMYRGAIKSILSELIRQDRLVVVEKFGVDAPKTKALISALNEYELNDVLIVTPEVDENLFLAARNLYKVDVRDVAGIDPVSLIAFEKVLMTADAVKQLEEALA</sequence>
<dbReference type="EMBL" id="CP001103">
    <property type="protein sequence ID" value="AEA96602.1"/>
    <property type="molecule type" value="Genomic_DNA"/>
</dbReference>
<dbReference type="RefSeq" id="WP_012516958.1">
    <property type="nucleotide sequence ID" value="NC_011138.3"/>
</dbReference>
<dbReference type="SMR" id="B4S092"/>
<dbReference type="GeneID" id="56340942"/>
<dbReference type="KEGG" id="amc:MADE_1002265"/>
<dbReference type="HOGENOM" id="CLU_041575_5_2_6"/>
<dbReference type="Proteomes" id="UP000001870">
    <property type="component" value="Chromosome"/>
</dbReference>
<dbReference type="GO" id="GO:1990904">
    <property type="term" value="C:ribonucleoprotein complex"/>
    <property type="evidence" value="ECO:0007669"/>
    <property type="project" value="UniProtKB-KW"/>
</dbReference>
<dbReference type="GO" id="GO:0005840">
    <property type="term" value="C:ribosome"/>
    <property type="evidence" value="ECO:0007669"/>
    <property type="project" value="UniProtKB-KW"/>
</dbReference>
<dbReference type="GO" id="GO:0019843">
    <property type="term" value="F:rRNA binding"/>
    <property type="evidence" value="ECO:0007669"/>
    <property type="project" value="UniProtKB-UniRule"/>
</dbReference>
<dbReference type="GO" id="GO:0003735">
    <property type="term" value="F:structural constituent of ribosome"/>
    <property type="evidence" value="ECO:0007669"/>
    <property type="project" value="InterPro"/>
</dbReference>
<dbReference type="GO" id="GO:0006412">
    <property type="term" value="P:translation"/>
    <property type="evidence" value="ECO:0007669"/>
    <property type="project" value="UniProtKB-UniRule"/>
</dbReference>
<dbReference type="FunFam" id="3.40.1370.10:FF:000001">
    <property type="entry name" value="50S ribosomal protein L4"/>
    <property type="match status" value="1"/>
</dbReference>
<dbReference type="Gene3D" id="3.40.1370.10">
    <property type="match status" value="1"/>
</dbReference>
<dbReference type="HAMAP" id="MF_01328_B">
    <property type="entry name" value="Ribosomal_uL4_B"/>
    <property type="match status" value="1"/>
</dbReference>
<dbReference type="InterPro" id="IPR002136">
    <property type="entry name" value="Ribosomal_uL4"/>
</dbReference>
<dbReference type="InterPro" id="IPR013005">
    <property type="entry name" value="Ribosomal_uL4-like"/>
</dbReference>
<dbReference type="InterPro" id="IPR023574">
    <property type="entry name" value="Ribosomal_uL4_dom_sf"/>
</dbReference>
<dbReference type="NCBIfam" id="TIGR03953">
    <property type="entry name" value="rplD_bact"/>
    <property type="match status" value="1"/>
</dbReference>
<dbReference type="PANTHER" id="PTHR10746">
    <property type="entry name" value="50S RIBOSOMAL PROTEIN L4"/>
    <property type="match status" value="1"/>
</dbReference>
<dbReference type="PANTHER" id="PTHR10746:SF6">
    <property type="entry name" value="LARGE RIBOSOMAL SUBUNIT PROTEIN UL4M"/>
    <property type="match status" value="1"/>
</dbReference>
<dbReference type="Pfam" id="PF00573">
    <property type="entry name" value="Ribosomal_L4"/>
    <property type="match status" value="1"/>
</dbReference>
<dbReference type="SUPFAM" id="SSF52166">
    <property type="entry name" value="Ribosomal protein L4"/>
    <property type="match status" value="1"/>
</dbReference>